<dbReference type="SMR" id="P0CH18"/>
<dbReference type="GO" id="GO:0005576">
    <property type="term" value="C:extracellular region"/>
    <property type="evidence" value="ECO:0007669"/>
    <property type="project" value="UniProtKB-SubCell"/>
</dbReference>
<dbReference type="GO" id="GO:0090729">
    <property type="term" value="F:toxin activity"/>
    <property type="evidence" value="ECO:0007669"/>
    <property type="project" value="UniProtKB-KW"/>
</dbReference>
<sequence>FGSFIPCAHKGEPCTICCRPLRCHEEKTPTCV</sequence>
<reference key="1">
    <citation type="journal article" date="2010" name="Peptides">
        <title>Divergent M- and O-superfamily peptides from venom of fish-hunting Conus parius.</title>
        <authorList>
            <person name="Jimenez E.C."/>
            <person name="Olivera B.M."/>
        </authorList>
    </citation>
    <scope>PROTEIN SEQUENCE</scope>
    <scope>FUNCTION</scope>
    <scope>HYDROXYLATION AT PRO-6; PRO-13; PRO-20 AND PRO-29</scope>
    <scope>MASS SPECTROMETRY</scope>
    <source>
        <tissue>Venom</tissue>
    </source>
</reference>
<feature type="peptide" id="PRO_0000397116" description="Conotoxin pr6b">
    <location>
        <begin position="1"/>
        <end position="32"/>
    </location>
</feature>
<feature type="modified residue" description="4-hydroxyproline" evidence="2">
    <location>
        <position position="6"/>
    </location>
</feature>
<feature type="modified residue" description="4-hydroxyproline" evidence="2">
    <location>
        <position position="13"/>
    </location>
</feature>
<feature type="modified residue" description="4-hydroxyproline" evidence="2">
    <location>
        <position position="20"/>
    </location>
</feature>
<feature type="modified residue" description="4-hydroxyproline" evidence="2">
    <location>
        <position position="29"/>
    </location>
</feature>
<feature type="disulfide bond" evidence="1">
    <location>
        <begin position="7"/>
        <end position="18"/>
    </location>
</feature>
<feature type="disulfide bond" evidence="1">
    <location>
        <begin position="14"/>
        <end position="23"/>
    </location>
</feature>
<feature type="disulfide bond" evidence="1">
    <location>
        <begin position="17"/>
        <end position="31"/>
    </location>
</feature>
<accession>P0CH18</accession>
<protein>
    <recommendedName>
        <fullName>Conotoxin pr6b</fullName>
    </recommendedName>
</protein>
<name>U6B_CONPI</name>
<comment type="function">
    <text evidence="2">Intraperitoneal injection into fish (0.5 nmol) provokes vertical suspension and paralysis after 6 minutes.</text>
</comment>
<comment type="subcellular location">
    <subcellularLocation>
        <location>Secreted</location>
    </subcellularLocation>
</comment>
<comment type="tissue specificity">
    <text>Expressed by the venom duct.</text>
</comment>
<comment type="domain">
    <text evidence="1">The presence of a 'disulfide through disulfide knot' structurally defines this protein as a knottin.</text>
</comment>
<comment type="domain">
    <text>The cysteine framework is VI/VII (C-C-CC-C-C).</text>
</comment>
<comment type="mass spectrometry">
    <text>Monoisotopic mass.</text>
</comment>
<keyword id="KW-0903">Direct protein sequencing</keyword>
<keyword id="KW-1015">Disulfide bond</keyword>
<keyword id="KW-0379">Hydroxylation</keyword>
<keyword id="KW-0960">Knottin</keyword>
<keyword id="KW-0528">Neurotoxin</keyword>
<keyword id="KW-0964">Secreted</keyword>
<keyword id="KW-0800">Toxin</keyword>
<proteinExistence type="evidence at protein level"/>
<evidence type="ECO:0000250" key="1"/>
<evidence type="ECO:0000269" key="2">
    <source>
    </source>
</evidence>
<organism>
    <name type="scientific">Conus parius</name>
    <name type="common">Cone snail</name>
    <dbReference type="NCBI Taxonomy" id="505247"/>
    <lineage>
        <taxon>Eukaryota</taxon>
        <taxon>Metazoa</taxon>
        <taxon>Spiralia</taxon>
        <taxon>Lophotrochozoa</taxon>
        <taxon>Mollusca</taxon>
        <taxon>Gastropoda</taxon>
        <taxon>Caenogastropoda</taxon>
        <taxon>Neogastropoda</taxon>
        <taxon>Conoidea</taxon>
        <taxon>Conidae</taxon>
        <taxon>Conus</taxon>
        <taxon>Phasmoconus</taxon>
    </lineage>
</organism>